<feature type="chain" id="PRO_0000335467" description="Translation initiation factor IF-2">
    <location>
        <begin position="1"/>
        <end position="842"/>
    </location>
</feature>
<feature type="domain" description="tr-type G">
    <location>
        <begin position="340"/>
        <end position="510"/>
    </location>
</feature>
<feature type="region of interest" description="Disordered" evidence="3">
    <location>
        <begin position="121"/>
        <end position="144"/>
    </location>
</feature>
<feature type="region of interest" description="G1" evidence="1">
    <location>
        <begin position="349"/>
        <end position="356"/>
    </location>
</feature>
<feature type="region of interest" description="G2" evidence="1">
    <location>
        <begin position="374"/>
        <end position="378"/>
    </location>
</feature>
<feature type="region of interest" description="G3" evidence="1">
    <location>
        <begin position="396"/>
        <end position="399"/>
    </location>
</feature>
<feature type="region of interest" description="G4" evidence="1">
    <location>
        <begin position="450"/>
        <end position="453"/>
    </location>
</feature>
<feature type="region of interest" description="G5" evidence="1">
    <location>
        <begin position="486"/>
        <end position="488"/>
    </location>
</feature>
<feature type="binding site" evidence="2">
    <location>
        <begin position="349"/>
        <end position="356"/>
    </location>
    <ligand>
        <name>GTP</name>
        <dbReference type="ChEBI" id="CHEBI:37565"/>
    </ligand>
</feature>
<feature type="binding site" evidence="2">
    <location>
        <begin position="396"/>
        <end position="400"/>
    </location>
    <ligand>
        <name>GTP</name>
        <dbReference type="ChEBI" id="CHEBI:37565"/>
    </ligand>
</feature>
<feature type="binding site" evidence="2">
    <location>
        <begin position="450"/>
        <end position="453"/>
    </location>
    <ligand>
        <name>GTP</name>
        <dbReference type="ChEBI" id="CHEBI:37565"/>
    </ligand>
</feature>
<protein>
    <recommendedName>
        <fullName evidence="2">Translation initiation factor IF-2</fullName>
    </recommendedName>
</protein>
<sequence>MNESKSVVDSGLMSGKIERTTLKLSDKLKLSSNIHQGTKFSLKKSVTTVEVRKSKKRKDINNIEQASVVLQNDNAYQDNESNNSLTIQEQISRMNALQNANICEKKEDIKEDTSDVNLQVTESTSVEKSESDDVTLEEESSKKVEEQVVEEAHDNTDTVSLNVVENVQEESQVDNQVESSNISDILQPKGIEEKKLKKYEKEHEEKKGNPKKGVSNNMYSKHVKLVIEEELEDNNKQVIQTHKSRKNRSTSSVKNKITRKVLIPKKITVQELASSMSERVKDVQHMLFQMGRRDIKPTDFLDSDHASVIVEAFNHTFKLVNDGKLEEDLYADGNDKELLPRAPVVTVMGHVDHGKTSLLDAIRKSNVADGEFKGITQHIGAYQIMLDGDKRITFIDTPGHEAFTAMRACGTNVTDIVVLVVAADDGIMPQTIESINHVKAANVAMIVAVNKIDKHDANIDKITNSLLNHGVVAESLGGDVIVVPVSAKERINLDQLKSSILLMAELLELKAVYDTRASGVVIESKVDRNCGVVATLIVQKGTLKAGDIIVVGHNSYGKVRNMFNSDGRSEKVAIPSMPVKVLGLNNVPNSGTNFIVVDSEKQARELISYRQELFNAELEANAKPKMDANSILACGVVDELNVILKCDVMGSVEAICYSISKITHEDIKLNVLYKGVGNVTKSDVLLAETSNSIILAFNVKTDASVKELAKQKCIEIKHYSVIYDIIDDVKKILSSMLKPLQQEVQVGTLSIRKVFSSGSIGSVLGCYVTNGIVRKGALVKLIRNNNVIHEGKIKVLRRFKDDVKEVAAGFECGILLDYSKEIYPESDIIHILEIVEEIRVIK</sequence>
<comment type="function">
    <text evidence="2">One of the essential components for the initiation of protein synthesis. Protects formylmethionyl-tRNA from spontaneous hydrolysis and promotes its binding to the 30S ribosomal subunits. Also involved in the hydrolysis of GTP during the formation of the 70S ribosomal complex.</text>
</comment>
<comment type="subcellular location">
    <subcellularLocation>
        <location evidence="2">Cytoplasm</location>
    </subcellularLocation>
</comment>
<comment type="similarity">
    <text evidence="2">Belongs to the TRAFAC class translation factor GTPase superfamily. Classic translation factor GTPase family. IF-2 subfamily.</text>
</comment>
<comment type="sequence caution" evidence="4">
    <conflict type="erroneous initiation">
        <sequence resource="EMBL-CDS" id="ABD44916"/>
    </conflict>
</comment>
<organism>
    <name type="scientific">Ehrlichia chaffeensis (strain ATCC CRL-10679 / Arkansas)</name>
    <dbReference type="NCBI Taxonomy" id="205920"/>
    <lineage>
        <taxon>Bacteria</taxon>
        <taxon>Pseudomonadati</taxon>
        <taxon>Pseudomonadota</taxon>
        <taxon>Alphaproteobacteria</taxon>
        <taxon>Rickettsiales</taxon>
        <taxon>Anaplasmataceae</taxon>
        <taxon>Ehrlichia</taxon>
    </lineage>
</organism>
<gene>
    <name evidence="2" type="primary">infB</name>
    <name type="ordered locus">ECH_0563</name>
</gene>
<proteinExistence type="inferred from homology"/>
<reference key="1">
    <citation type="journal article" date="2006" name="PLoS Genet.">
        <title>Comparative genomics of emerging human ehrlichiosis agents.</title>
        <authorList>
            <person name="Dunning Hotopp J.C."/>
            <person name="Lin M."/>
            <person name="Madupu R."/>
            <person name="Crabtree J."/>
            <person name="Angiuoli S.V."/>
            <person name="Eisen J.A."/>
            <person name="Seshadri R."/>
            <person name="Ren Q."/>
            <person name="Wu M."/>
            <person name="Utterback T.R."/>
            <person name="Smith S."/>
            <person name="Lewis M."/>
            <person name="Khouri H."/>
            <person name="Zhang C."/>
            <person name="Niu H."/>
            <person name="Lin Q."/>
            <person name="Ohashi N."/>
            <person name="Zhi N."/>
            <person name="Nelson W.C."/>
            <person name="Brinkac L.M."/>
            <person name="Dodson R.J."/>
            <person name="Rosovitz M.J."/>
            <person name="Sundaram J.P."/>
            <person name="Daugherty S.C."/>
            <person name="Davidsen T."/>
            <person name="Durkin A.S."/>
            <person name="Gwinn M.L."/>
            <person name="Haft D.H."/>
            <person name="Selengut J.D."/>
            <person name="Sullivan S.A."/>
            <person name="Zafar N."/>
            <person name="Zhou L."/>
            <person name="Benahmed F."/>
            <person name="Forberger H."/>
            <person name="Halpin R."/>
            <person name="Mulligan S."/>
            <person name="Robinson J."/>
            <person name="White O."/>
            <person name="Rikihisa Y."/>
            <person name="Tettelin H."/>
        </authorList>
    </citation>
    <scope>NUCLEOTIDE SEQUENCE [LARGE SCALE GENOMIC DNA]</scope>
    <source>
        <strain>ATCC CRL-10679 / Arkansas</strain>
    </source>
</reference>
<name>IF2_EHRCR</name>
<dbReference type="EMBL" id="CP000236">
    <property type="protein sequence ID" value="ABD44916.1"/>
    <property type="status" value="ALT_INIT"/>
    <property type="molecule type" value="Genomic_DNA"/>
</dbReference>
<dbReference type="RefSeq" id="WP_044148381.1">
    <property type="nucleotide sequence ID" value="NC_007799.1"/>
</dbReference>
<dbReference type="SMR" id="Q2GGQ8"/>
<dbReference type="STRING" id="205920.ECH_0563"/>
<dbReference type="KEGG" id="ech:ECH_0563"/>
<dbReference type="eggNOG" id="COG0532">
    <property type="taxonomic scope" value="Bacteria"/>
</dbReference>
<dbReference type="HOGENOM" id="CLU_006301_10_2_5"/>
<dbReference type="OrthoDB" id="9811804at2"/>
<dbReference type="Proteomes" id="UP000008320">
    <property type="component" value="Chromosome"/>
</dbReference>
<dbReference type="GO" id="GO:0005737">
    <property type="term" value="C:cytoplasm"/>
    <property type="evidence" value="ECO:0007669"/>
    <property type="project" value="UniProtKB-SubCell"/>
</dbReference>
<dbReference type="GO" id="GO:0005525">
    <property type="term" value="F:GTP binding"/>
    <property type="evidence" value="ECO:0007669"/>
    <property type="project" value="UniProtKB-KW"/>
</dbReference>
<dbReference type="GO" id="GO:0003924">
    <property type="term" value="F:GTPase activity"/>
    <property type="evidence" value="ECO:0007669"/>
    <property type="project" value="UniProtKB-UniRule"/>
</dbReference>
<dbReference type="GO" id="GO:0003743">
    <property type="term" value="F:translation initiation factor activity"/>
    <property type="evidence" value="ECO:0007669"/>
    <property type="project" value="UniProtKB-UniRule"/>
</dbReference>
<dbReference type="CDD" id="cd01887">
    <property type="entry name" value="IF2_eIF5B"/>
    <property type="match status" value="1"/>
</dbReference>
<dbReference type="CDD" id="cd03702">
    <property type="entry name" value="IF2_mtIF2_II"/>
    <property type="match status" value="1"/>
</dbReference>
<dbReference type="CDD" id="cd03692">
    <property type="entry name" value="mtIF2_IVc"/>
    <property type="match status" value="1"/>
</dbReference>
<dbReference type="FunFam" id="2.40.30.10:FF:000008">
    <property type="entry name" value="Translation initiation factor IF-2"/>
    <property type="match status" value="1"/>
</dbReference>
<dbReference type="FunFam" id="2.40.30.10:FF:000054">
    <property type="entry name" value="Translation initiation factor IF-2"/>
    <property type="match status" value="1"/>
</dbReference>
<dbReference type="FunFam" id="3.40.50.10050:FF:000001">
    <property type="entry name" value="Translation initiation factor IF-2"/>
    <property type="match status" value="1"/>
</dbReference>
<dbReference type="FunFam" id="3.40.50.300:FF:000019">
    <property type="entry name" value="Translation initiation factor IF-2"/>
    <property type="match status" value="1"/>
</dbReference>
<dbReference type="Gene3D" id="3.40.50.300">
    <property type="entry name" value="P-loop containing nucleotide triphosphate hydrolases"/>
    <property type="match status" value="1"/>
</dbReference>
<dbReference type="Gene3D" id="2.40.30.10">
    <property type="entry name" value="Translation factors"/>
    <property type="match status" value="2"/>
</dbReference>
<dbReference type="Gene3D" id="3.40.50.10050">
    <property type="entry name" value="Translation initiation factor IF- 2, domain 3"/>
    <property type="match status" value="1"/>
</dbReference>
<dbReference type="HAMAP" id="MF_00100_B">
    <property type="entry name" value="IF_2_B"/>
    <property type="match status" value="1"/>
</dbReference>
<dbReference type="InterPro" id="IPR053905">
    <property type="entry name" value="EF-G-like_DII"/>
</dbReference>
<dbReference type="InterPro" id="IPR044145">
    <property type="entry name" value="IF2_II"/>
</dbReference>
<dbReference type="InterPro" id="IPR006847">
    <property type="entry name" value="IF2_N"/>
</dbReference>
<dbReference type="InterPro" id="IPR027417">
    <property type="entry name" value="P-loop_NTPase"/>
</dbReference>
<dbReference type="InterPro" id="IPR005225">
    <property type="entry name" value="Small_GTP-bd"/>
</dbReference>
<dbReference type="InterPro" id="IPR000795">
    <property type="entry name" value="T_Tr_GTP-bd_dom"/>
</dbReference>
<dbReference type="InterPro" id="IPR000178">
    <property type="entry name" value="TF_IF2_bacterial-like"/>
</dbReference>
<dbReference type="InterPro" id="IPR015760">
    <property type="entry name" value="TIF_IF2"/>
</dbReference>
<dbReference type="InterPro" id="IPR023115">
    <property type="entry name" value="TIF_IF2_dom3"/>
</dbReference>
<dbReference type="InterPro" id="IPR036925">
    <property type="entry name" value="TIF_IF2_dom3_sf"/>
</dbReference>
<dbReference type="InterPro" id="IPR009000">
    <property type="entry name" value="Transl_B-barrel_sf"/>
</dbReference>
<dbReference type="NCBIfam" id="TIGR00487">
    <property type="entry name" value="IF-2"/>
    <property type="match status" value="1"/>
</dbReference>
<dbReference type="NCBIfam" id="TIGR00231">
    <property type="entry name" value="small_GTP"/>
    <property type="match status" value="1"/>
</dbReference>
<dbReference type="PANTHER" id="PTHR43381:SF5">
    <property type="entry name" value="TR-TYPE G DOMAIN-CONTAINING PROTEIN"/>
    <property type="match status" value="1"/>
</dbReference>
<dbReference type="PANTHER" id="PTHR43381">
    <property type="entry name" value="TRANSLATION INITIATION FACTOR IF-2-RELATED"/>
    <property type="match status" value="1"/>
</dbReference>
<dbReference type="Pfam" id="PF22042">
    <property type="entry name" value="EF-G_D2"/>
    <property type="match status" value="1"/>
</dbReference>
<dbReference type="Pfam" id="PF00009">
    <property type="entry name" value="GTP_EFTU"/>
    <property type="match status" value="1"/>
</dbReference>
<dbReference type="Pfam" id="PF11987">
    <property type="entry name" value="IF-2"/>
    <property type="match status" value="1"/>
</dbReference>
<dbReference type="Pfam" id="PF04760">
    <property type="entry name" value="IF2_N"/>
    <property type="match status" value="1"/>
</dbReference>
<dbReference type="SUPFAM" id="SSF52156">
    <property type="entry name" value="Initiation factor IF2/eIF5b, domain 3"/>
    <property type="match status" value="1"/>
</dbReference>
<dbReference type="SUPFAM" id="SSF52540">
    <property type="entry name" value="P-loop containing nucleoside triphosphate hydrolases"/>
    <property type="match status" value="1"/>
</dbReference>
<dbReference type="SUPFAM" id="SSF50447">
    <property type="entry name" value="Translation proteins"/>
    <property type="match status" value="2"/>
</dbReference>
<dbReference type="PROSITE" id="PS51722">
    <property type="entry name" value="G_TR_2"/>
    <property type="match status" value="1"/>
</dbReference>
<dbReference type="PROSITE" id="PS01176">
    <property type="entry name" value="IF2"/>
    <property type="match status" value="1"/>
</dbReference>
<accession>Q2GGQ8</accession>
<evidence type="ECO:0000250" key="1"/>
<evidence type="ECO:0000255" key="2">
    <source>
        <dbReference type="HAMAP-Rule" id="MF_00100"/>
    </source>
</evidence>
<evidence type="ECO:0000256" key="3">
    <source>
        <dbReference type="SAM" id="MobiDB-lite"/>
    </source>
</evidence>
<evidence type="ECO:0000305" key="4"/>
<keyword id="KW-0963">Cytoplasm</keyword>
<keyword id="KW-0342">GTP-binding</keyword>
<keyword id="KW-0396">Initiation factor</keyword>
<keyword id="KW-0547">Nucleotide-binding</keyword>
<keyword id="KW-0648">Protein biosynthesis</keyword>
<keyword id="KW-1185">Reference proteome</keyword>